<keyword id="KW-0965">Cell junction</keyword>
<keyword id="KW-1003">Cell membrane</keyword>
<keyword id="KW-1015">Disulfide bond</keyword>
<keyword id="KW-0967">Endosome</keyword>
<keyword id="KW-0297">G-protein coupled receptor</keyword>
<keyword id="KW-0325">Glycoprotein</keyword>
<keyword id="KW-1017">Isopeptide bond</keyword>
<keyword id="KW-0458">Lysosome</keyword>
<keyword id="KW-0472">Membrane</keyword>
<keyword id="KW-0597">Phosphoprotein</keyword>
<keyword id="KW-0654">Proteoglycan</keyword>
<keyword id="KW-0675">Receptor</keyword>
<keyword id="KW-0765">Sulfation</keyword>
<keyword id="KW-0807">Transducer</keyword>
<keyword id="KW-0812">Transmembrane</keyword>
<keyword id="KW-1133">Transmembrane helix</keyword>
<keyword id="KW-0832">Ubl conjugation</keyword>
<feature type="chain" id="PRO_0000247981" description="C-X-C chemokine receptor type 4">
    <location>
        <begin position="1"/>
        <end position="352"/>
    </location>
</feature>
<feature type="topological domain" description="Extracellular" evidence="6">
    <location>
        <begin position="1"/>
        <end position="38"/>
    </location>
</feature>
<feature type="transmembrane region" description="Helical; Name=1" evidence="2">
    <location>
        <begin position="39"/>
        <end position="63"/>
    </location>
</feature>
<feature type="topological domain" description="Cytoplasmic" evidence="6">
    <location>
        <begin position="64"/>
        <end position="77"/>
    </location>
</feature>
<feature type="transmembrane region" description="Helical; Name=2" evidence="2">
    <location>
        <begin position="78"/>
        <end position="99"/>
    </location>
</feature>
<feature type="topological domain" description="Extracellular" evidence="6">
    <location>
        <begin position="100"/>
        <end position="110"/>
    </location>
</feature>
<feature type="transmembrane region" description="Helical; Name=3" evidence="2">
    <location>
        <begin position="111"/>
        <end position="130"/>
    </location>
</feature>
<feature type="topological domain" description="Cytoplasmic" evidence="6">
    <location>
        <begin position="131"/>
        <end position="154"/>
    </location>
</feature>
<feature type="transmembrane region" description="Helical; Name=4" evidence="2">
    <location>
        <begin position="155"/>
        <end position="174"/>
    </location>
</feature>
<feature type="topological domain" description="Extracellular" evidence="6">
    <location>
        <begin position="175"/>
        <end position="195"/>
    </location>
</feature>
<feature type="transmembrane region" description="Helical; Name=5" evidence="2">
    <location>
        <begin position="196"/>
        <end position="216"/>
    </location>
</feature>
<feature type="topological domain" description="Cytoplasmic" evidence="6">
    <location>
        <begin position="217"/>
        <end position="241"/>
    </location>
</feature>
<feature type="transmembrane region" description="Helical; Name=6" evidence="2">
    <location>
        <begin position="242"/>
        <end position="261"/>
    </location>
</feature>
<feature type="topological domain" description="Extracellular" evidence="6">
    <location>
        <begin position="262"/>
        <end position="282"/>
    </location>
</feature>
<feature type="transmembrane region" description="Helical; Name=7" evidence="2">
    <location>
        <begin position="283"/>
        <end position="302"/>
    </location>
</feature>
<feature type="topological domain" description="Cytoplasmic" evidence="6">
    <location>
        <begin position="303"/>
        <end position="352"/>
    </location>
</feature>
<feature type="region of interest" description="Important for chemokine binding and signaling" evidence="1">
    <location>
        <begin position="1"/>
        <end position="21"/>
    </location>
</feature>
<feature type="region of interest" description="Chemokine binding" evidence="1">
    <location>
        <begin position="94"/>
        <end position="97"/>
    </location>
</feature>
<feature type="region of interest" description="Chemokine binding" evidence="1">
    <location>
        <begin position="113"/>
        <end position="117"/>
    </location>
</feature>
<feature type="region of interest" description="Involved in dimerization; when bound to chemokine" evidence="1">
    <location>
        <begin position="135"/>
        <end position="147"/>
    </location>
</feature>
<feature type="region of interest" description="Chemokine binding, important for signaling" evidence="1">
    <location>
        <begin position="186"/>
        <end position="190"/>
    </location>
</feature>
<feature type="region of interest" description="Involved in dimerization" evidence="1">
    <location>
        <begin position="191"/>
        <end position="210"/>
    </location>
</feature>
<feature type="region of interest" description="Involved in dimerization" evidence="1">
    <location>
        <begin position="266"/>
        <end position="268"/>
    </location>
</feature>
<feature type="region of interest" description="Disordered" evidence="5">
    <location>
        <begin position="329"/>
        <end position="352"/>
    </location>
</feature>
<feature type="short sequence motif" description="Important for signaling" evidence="1">
    <location>
        <begin position="133"/>
        <end position="135"/>
    </location>
</feature>
<feature type="compositionally biased region" description="Low complexity" evidence="5">
    <location>
        <begin position="337"/>
        <end position="352"/>
    </location>
</feature>
<feature type="site" description="Chemokine" evidence="1">
    <location>
        <position position="171"/>
    </location>
</feature>
<feature type="site" description="Chemokine" evidence="1">
    <location>
        <position position="288"/>
    </location>
</feature>
<feature type="modified residue" description="Sulfotyrosine" evidence="2">
    <location>
        <position position="7"/>
    </location>
</feature>
<feature type="modified residue" description="Sulfotyrosine" evidence="2">
    <location>
        <position position="12"/>
    </location>
</feature>
<feature type="modified residue" description="Sulfotyrosine" evidence="2">
    <location>
        <position position="21"/>
    </location>
</feature>
<feature type="modified residue" description="Phosphoserine" evidence="2">
    <location>
        <position position="319"/>
    </location>
</feature>
<feature type="modified residue" description="Phosphoserine" evidence="2">
    <location>
        <position position="321"/>
    </location>
</feature>
<feature type="modified residue" description="Phosphoserine; by PKC and GRK6" evidence="2">
    <location>
        <position position="324"/>
    </location>
</feature>
<feature type="modified residue" description="Phosphoserine; by PKC and GRK6" evidence="2">
    <location>
        <position position="325"/>
    </location>
</feature>
<feature type="modified residue" description="Phosphoserine; by GRK6" evidence="2">
    <location>
        <position position="330"/>
    </location>
</feature>
<feature type="modified residue" description="Phosphoserine; by GRK6" evidence="2">
    <location>
        <position position="339"/>
    </location>
</feature>
<feature type="modified residue" description="Phosphoserine" evidence="2">
    <location>
        <position position="348"/>
    </location>
</feature>
<feature type="modified residue" description="Phosphoserine" evidence="2">
    <location>
        <position position="351"/>
    </location>
</feature>
<feature type="glycosylation site" description="N-linked (GlcNAc...) asparagine" evidence="1">
    <location>
        <position position="11"/>
    </location>
</feature>
<feature type="glycosylation site" description="O-linked (Xyl...) (chondroitin sulfate) serine" evidence="2">
    <location>
        <position position="18"/>
    </location>
</feature>
<feature type="disulfide bond" evidence="4">
    <location>
        <begin position="28"/>
        <end position="274"/>
    </location>
</feature>
<feature type="disulfide bond" evidence="4">
    <location>
        <begin position="109"/>
        <end position="186"/>
    </location>
</feature>
<feature type="cross-link" description="Glycyl lysine isopeptide (Lys-Gly) (interchain with G-Cter in ubiquitin)" evidence="2">
    <location>
        <position position="331"/>
    </location>
</feature>
<dbReference type="EMBL" id="AY177628">
    <property type="protein sequence ID" value="AAO47588.2"/>
    <property type="molecule type" value="mRNA"/>
</dbReference>
<dbReference type="RefSeq" id="NP_001274295.1">
    <property type="nucleotide sequence ID" value="NM_001287366.1"/>
</dbReference>
<dbReference type="SMR" id="Q7YS92"/>
<dbReference type="GlyCosmos" id="Q7YS92">
    <property type="glycosylation" value="2 sites, No reported glycans"/>
</dbReference>
<dbReference type="GeneID" id="102472005"/>
<dbReference type="KEGG" id="tup:102472005"/>
<dbReference type="CTD" id="7852"/>
<dbReference type="eggNOG" id="KOG3656">
    <property type="taxonomic scope" value="Eukaryota"/>
</dbReference>
<dbReference type="OrthoDB" id="8413490at2759"/>
<dbReference type="GO" id="GO:0070161">
    <property type="term" value="C:anchoring junction"/>
    <property type="evidence" value="ECO:0007669"/>
    <property type="project" value="UniProtKB-SubCell"/>
</dbReference>
<dbReference type="GO" id="GO:0005769">
    <property type="term" value="C:early endosome"/>
    <property type="evidence" value="ECO:0000250"/>
    <property type="project" value="UniProtKB"/>
</dbReference>
<dbReference type="GO" id="GO:0009897">
    <property type="term" value="C:external side of plasma membrane"/>
    <property type="evidence" value="ECO:0007669"/>
    <property type="project" value="TreeGrafter"/>
</dbReference>
<dbReference type="GO" id="GO:0005770">
    <property type="term" value="C:late endosome"/>
    <property type="evidence" value="ECO:0000250"/>
    <property type="project" value="UniProtKB"/>
</dbReference>
<dbReference type="GO" id="GO:0005764">
    <property type="term" value="C:lysosome"/>
    <property type="evidence" value="ECO:0000250"/>
    <property type="project" value="UniProtKB"/>
</dbReference>
<dbReference type="GO" id="GO:0005886">
    <property type="term" value="C:plasma membrane"/>
    <property type="evidence" value="ECO:0000250"/>
    <property type="project" value="UniProtKB"/>
</dbReference>
<dbReference type="GO" id="GO:0019957">
    <property type="term" value="F:C-C chemokine binding"/>
    <property type="evidence" value="ECO:0007669"/>
    <property type="project" value="TreeGrafter"/>
</dbReference>
<dbReference type="GO" id="GO:0016493">
    <property type="term" value="F:C-C chemokine receptor activity"/>
    <property type="evidence" value="ECO:0007669"/>
    <property type="project" value="TreeGrafter"/>
</dbReference>
<dbReference type="GO" id="GO:0038147">
    <property type="term" value="F:C-X-C motif chemokine 12 receptor activity"/>
    <property type="evidence" value="ECO:0000250"/>
    <property type="project" value="UniProtKB"/>
</dbReference>
<dbReference type="GO" id="GO:0007420">
    <property type="term" value="P:brain development"/>
    <property type="evidence" value="ECO:0007669"/>
    <property type="project" value="TreeGrafter"/>
</dbReference>
<dbReference type="GO" id="GO:0019722">
    <property type="term" value="P:calcium-mediated signaling"/>
    <property type="evidence" value="ECO:0007669"/>
    <property type="project" value="TreeGrafter"/>
</dbReference>
<dbReference type="GO" id="GO:0060326">
    <property type="term" value="P:cell chemotaxis"/>
    <property type="evidence" value="ECO:0007669"/>
    <property type="project" value="TreeGrafter"/>
</dbReference>
<dbReference type="GO" id="GO:0071345">
    <property type="term" value="P:cellular response to cytokine stimulus"/>
    <property type="evidence" value="ECO:0000250"/>
    <property type="project" value="UniProtKB"/>
</dbReference>
<dbReference type="GO" id="GO:0038160">
    <property type="term" value="P:CXCL12-activated CXCR4 signaling pathway"/>
    <property type="evidence" value="ECO:0000250"/>
    <property type="project" value="UniProtKB"/>
</dbReference>
<dbReference type="GO" id="GO:0006955">
    <property type="term" value="P:immune response"/>
    <property type="evidence" value="ECO:0007669"/>
    <property type="project" value="TreeGrafter"/>
</dbReference>
<dbReference type="GO" id="GO:0022008">
    <property type="term" value="P:neurogenesis"/>
    <property type="evidence" value="ECO:0007669"/>
    <property type="project" value="TreeGrafter"/>
</dbReference>
<dbReference type="GO" id="GO:0007204">
    <property type="term" value="P:positive regulation of cytosolic calcium ion concentration"/>
    <property type="evidence" value="ECO:0007669"/>
    <property type="project" value="TreeGrafter"/>
</dbReference>
<dbReference type="CDD" id="cd15179">
    <property type="entry name" value="7tmA_CXCR4"/>
    <property type="match status" value="1"/>
</dbReference>
<dbReference type="FunFam" id="1.20.1070.10:FF:000063">
    <property type="entry name" value="C-X-C chemokine receptor type 4"/>
    <property type="match status" value="1"/>
</dbReference>
<dbReference type="Gene3D" id="1.20.1070.10">
    <property type="entry name" value="Rhodopsin 7-helix transmembrane proteins"/>
    <property type="match status" value="1"/>
</dbReference>
<dbReference type="InterPro" id="IPR050119">
    <property type="entry name" value="CCR1-9-like"/>
</dbReference>
<dbReference type="InterPro" id="IPR022726">
    <property type="entry name" value="Chemokine_CXCR4_N_dom"/>
</dbReference>
<dbReference type="InterPro" id="IPR000355">
    <property type="entry name" value="Chemokine_rcpt"/>
</dbReference>
<dbReference type="InterPro" id="IPR001277">
    <property type="entry name" value="CXCR4/ACKR2"/>
</dbReference>
<dbReference type="InterPro" id="IPR000276">
    <property type="entry name" value="GPCR_Rhodpsn"/>
</dbReference>
<dbReference type="InterPro" id="IPR017452">
    <property type="entry name" value="GPCR_Rhodpsn_7TM"/>
</dbReference>
<dbReference type="PANTHER" id="PTHR10489:SF594">
    <property type="entry name" value="C-X-C CHEMOKINE RECEPTOR TYPE 4"/>
    <property type="match status" value="1"/>
</dbReference>
<dbReference type="PANTHER" id="PTHR10489">
    <property type="entry name" value="CELL ADHESION MOLECULE"/>
    <property type="match status" value="1"/>
</dbReference>
<dbReference type="Pfam" id="PF00001">
    <property type="entry name" value="7tm_1"/>
    <property type="match status" value="1"/>
</dbReference>
<dbReference type="Pfam" id="PF12109">
    <property type="entry name" value="CXCR4_N"/>
    <property type="match status" value="1"/>
</dbReference>
<dbReference type="PRINTS" id="PR00657">
    <property type="entry name" value="CCCHEMOKINER"/>
</dbReference>
<dbReference type="PRINTS" id="PR00645">
    <property type="entry name" value="CXCCHMKINER4"/>
</dbReference>
<dbReference type="PRINTS" id="PR00237">
    <property type="entry name" value="GPCRRHODOPSN"/>
</dbReference>
<dbReference type="SUPFAM" id="SSF81321">
    <property type="entry name" value="Family A G protein-coupled receptor-like"/>
    <property type="match status" value="1"/>
</dbReference>
<dbReference type="PROSITE" id="PS00237">
    <property type="entry name" value="G_PROTEIN_RECEP_F1_1"/>
    <property type="match status" value="1"/>
</dbReference>
<dbReference type="PROSITE" id="PS50262">
    <property type="entry name" value="G_PROTEIN_RECEP_F1_2"/>
    <property type="match status" value="1"/>
</dbReference>
<proteinExistence type="evidence at transcript level"/>
<protein>
    <recommendedName>
        <fullName>C-X-C chemokine receptor type 4</fullName>
        <shortName>CXC-R4</shortName>
        <shortName>CXCR-4</shortName>
    </recommendedName>
    <cdAntigenName>CD184</cdAntigenName>
</protein>
<accession>Q7YS92</accession>
<comment type="function">
    <text evidence="2 3">Receptor for the C-X-C chemokine CXCL12/SDF-1 that transduces a signal by increasing intracellular calcium ion levels and enhancing MAPK1/MAPK3 activation. Involved in the AKT signaling cascade (By similarity). Plays a role in regulation of cell migration, e.g. during wound healing. Acts as a receptor for extracellular ubiquitin; leading to enhanced intracellular calcium ions and reduced cellular cAMP levels. Binds bacterial lipopolysaccharide (LPS) et mediates LPS-induced inflammatory response, including TNF secretion by monocytes (By similarity). Involved in hematopoiesis and in cardiac ventricular septum formation. Also plays an essential role in vascularization of the gastrointestinal tract, probably by regulating vascular branching and/or remodeling processes in endothelial cells. Involved in cerebellar development. In the CNS, could mediate hippocampal-neuron survival (By similarity).</text>
</comment>
<comment type="subunit">
    <text evidence="2">Monomer. Can form homodimers. Interacts with CD164. Interacts with ARRB2; the interaction is dependent on the C-terminal phosphorylation of CXCR4 and allows activation of MAPK1 and MAPK3. Interacts with ARR3; the interaction is dependent on the C-terminal phosphorylation of CXCR4 and modulates calcium mobilization. Interacts with RNF113A; the interaction, enhanced by CXCL12, promotes CXCR4 ubiquitination and subsequent degradation. Interacts (via the cytoplasmic C-terminal) with ITCH (via the WW domains I and II); the interaction, enhanced by CXCL12, promotes CXCR4 ubiquitination and leads to its degradation. Interacts with extracellular ubiquitin. Interacts with DBN1; this interaction is enhanced by antigenic stimulation. Following LPS binding, may form a complex with GDF5, HSP90AA1 and HSPA8.</text>
</comment>
<comment type="subcellular location">
    <subcellularLocation>
        <location evidence="2">Cell membrane</location>
        <topology evidence="2">Multi-pass membrane protein</topology>
    </subcellularLocation>
    <subcellularLocation>
        <location evidence="1">Cell junction</location>
    </subcellularLocation>
    <subcellularLocation>
        <location evidence="1">Early endosome</location>
    </subcellularLocation>
    <subcellularLocation>
        <location evidence="1">Late endosome</location>
    </subcellularLocation>
    <subcellularLocation>
        <location evidence="1">Lysosome</location>
    </subcellularLocation>
    <text evidence="1">In unstimulated cells, diffuse pattern on plasma membrane. On agonist stimulation, colocalizes with ITCH at the plasma membrane where it becomes ubiquitinated (By similarity). In the presence of antigen, distributes to the immunological synapse forming at the T-cell-APC contact area, where it localizes at the peripheral and distal supramolecular activation cluster (SMAC) (By similarity).</text>
</comment>
<comment type="PTM">
    <text evidence="2">Phosphorylated on agonist stimulation. Rapidly phosphorylated on serine and threonine residues in the C-terminal. Phosphorylation at Ser-324 and Ser-325 leads to recruitment of ITCH, ubiquitination and protein degradation.</text>
</comment>
<comment type="PTM">
    <text evidence="2">Ubiquitinated after ligand binding, leading to its degradation. Ubiquitinated by ITCH at the cell membrane on agonist stimulation. The ubiquitin-dependent mechanism, endosomal sorting complex required for transport (ESCRT), then targets CXCR4 for lysosomal degradation. This process is dependent also on prior Ser-/Thr-phosphorylation in the C-terminal of CXCR4. Also binding of ARRB1 to STAM negatively regulates CXCR4 sorting to lysosomes though modulating ubiquitination of SFR5S.</text>
</comment>
<comment type="PTM">
    <text evidence="2">Sulfation is required for efficient binding of CXCL12/SDF-1alpha and promotes its dimerization.</text>
</comment>
<comment type="PTM">
    <text evidence="2">O- and N-glycosylated. N-glycosylation can mask coreceptor function. The O-glycosylation chondroitin sulfate attachment does not affect interaction with CXCL12/SDF-1alpha nor its coreceptor activity.</text>
</comment>
<comment type="similarity">
    <text evidence="4">Belongs to the G-protein coupled receptor 1 family.</text>
</comment>
<evidence type="ECO:0000250" key="1"/>
<evidence type="ECO:0000250" key="2">
    <source>
        <dbReference type="UniProtKB" id="P61073"/>
    </source>
</evidence>
<evidence type="ECO:0000250" key="3">
    <source>
        <dbReference type="UniProtKB" id="P70658"/>
    </source>
</evidence>
<evidence type="ECO:0000255" key="4">
    <source>
        <dbReference type="PROSITE-ProRule" id="PRU00521"/>
    </source>
</evidence>
<evidence type="ECO:0000256" key="5">
    <source>
        <dbReference type="SAM" id="MobiDB-lite"/>
    </source>
</evidence>
<evidence type="ECO:0000305" key="6"/>
<sequence>MEGISIYTSDNYSEELGSGDYDSIKEPCFREENAHFNRIFLPTIYSIIFLTGIVGNGLVILVMGYQKKLRSMTDKYRLHLSVADLLFVITLPFWAVDAVANWYFGNFLCKAVHVIYTVNLYSSVLILAFISLDRYLAIVHATNSQRPRKLLAEKVVYVGVWIPALLLTIPDFIFANVSEAEDRYICDRFYPNDLWVVVFQFQHIMVGLILPGIVILSCYCIIISKLSHSKGHQKRKALKTTVILILAFFACWLPYYIGISIDSFILLEIIKQGCEFESTVHKWISITEALAFFHCCLNPILYAFLGAKFKSSAQHALTSVSRGSSLKILSKGKRGGHSSVSTESESSSFHSS</sequence>
<organism>
    <name type="scientific">Tupaia chinensis</name>
    <name type="common">Chinese tree shrew</name>
    <dbReference type="NCBI Taxonomy" id="246437"/>
    <lineage>
        <taxon>Eukaryota</taxon>
        <taxon>Metazoa</taxon>
        <taxon>Chordata</taxon>
        <taxon>Craniata</taxon>
        <taxon>Vertebrata</taxon>
        <taxon>Euteleostomi</taxon>
        <taxon>Mammalia</taxon>
        <taxon>Eutheria</taxon>
        <taxon>Euarchontoglires</taxon>
        <taxon>Scandentia</taxon>
        <taxon>Tupaiidae</taxon>
        <taxon>Tupaia</taxon>
    </lineage>
</organism>
<name>CXCR4_TUPCH</name>
<gene>
    <name type="primary">CXCR4</name>
</gene>
<reference key="1">
    <citation type="submission" date="2003-05" db="EMBL/GenBank/DDBJ databases">
        <title>Cloning and sequence analysis of HIV-1 related genes of CD4, CXCR4 and CCR5 from tree shrew.</title>
        <authorList>
            <person name="Yang M."/>
            <person name="Ben K."/>
        </authorList>
    </citation>
    <scope>NUCLEOTIDE SEQUENCE [MRNA]</scope>
</reference>